<name>IEND3_MYCMD</name>
<protein>
    <recommendedName>
        <fullName>Probable intron-encoded DNA endonuclease 3</fullName>
        <ecNumber>3.1.-.-</ecNumber>
    </recommendedName>
</protein>
<accession>Q0H8Z1</accession>
<proteinExistence type="inferred from homology"/>
<comment type="function">
    <text evidence="1">Mitochondrial DNA endonuclease involved in intron homing.</text>
</comment>
<comment type="subcellular location">
    <subcellularLocation>
        <location>Mitochondrion</location>
    </subcellularLocation>
</comment>
<comment type="miscellaneous">
    <text>Encoded within intron 3 (LRI3) of mitochondrial large subunit ribosomal RNA.</text>
</comment>
<comment type="similarity">
    <text evidence="2">Belongs to the LAGLIDADG endonuclease family.</text>
</comment>
<evidence type="ECO:0000250" key="1"/>
<evidence type="ECO:0000305" key="2"/>
<organism>
    <name type="scientific">Mycosarcoma maydis</name>
    <name type="common">Corn smut fungus</name>
    <name type="synonym">Ustilago maydis</name>
    <dbReference type="NCBI Taxonomy" id="5270"/>
    <lineage>
        <taxon>Eukaryota</taxon>
        <taxon>Fungi</taxon>
        <taxon>Dikarya</taxon>
        <taxon>Basidiomycota</taxon>
        <taxon>Ustilaginomycotina</taxon>
        <taxon>Ustilaginomycetes</taxon>
        <taxon>Ustilaginales</taxon>
        <taxon>Ustilaginaceae</taxon>
        <taxon>Mycosarcoma</taxon>
    </lineage>
</organism>
<gene>
    <name type="primary">hegI3</name>
    <name type="synonym">rnl</name>
</gene>
<dbReference type="EC" id="3.1.-.-"/>
<dbReference type="EMBL" id="DQ157700">
    <property type="protein sequence ID" value="AAZ67022.1"/>
    <property type="molecule type" value="Genomic_DNA"/>
</dbReference>
<dbReference type="EMBL" id="AACP01000278">
    <property type="status" value="NOT_ANNOTATED_CDS"/>
    <property type="molecule type" value="Genomic_DNA"/>
</dbReference>
<dbReference type="RefSeq" id="YP_762681.1">
    <property type="nucleotide sequence ID" value="NC_008368.1"/>
</dbReference>
<dbReference type="SMR" id="Q0H8Z1"/>
<dbReference type="STRING" id="237631.Q0H8Z1"/>
<dbReference type="GeneID" id="4308286"/>
<dbReference type="InParanoid" id="Q0H8Z1"/>
<dbReference type="Proteomes" id="UP000000561">
    <property type="component" value="Mitochondrion"/>
</dbReference>
<dbReference type="GO" id="GO:0005739">
    <property type="term" value="C:mitochondrion"/>
    <property type="evidence" value="ECO:0007669"/>
    <property type="project" value="UniProtKB-SubCell"/>
</dbReference>
<dbReference type="GO" id="GO:0004519">
    <property type="term" value="F:endonuclease activity"/>
    <property type="evidence" value="ECO:0007669"/>
    <property type="project" value="UniProtKB-KW"/>
</dbReference>
<dbReference type="GO" id="GO:0006314">
    <property type="term" value="P:intron homing"/>
    <property type="evidence" value="ECO:0007669"/>
    <property type="project" value="UniProtKB-KW"/>
</dbReference>
<dbReference type="Gene3D" id="3.10.28.10">
    <property type="entry name" value="Homing endonucleases"/>
    <property type="match status" value="1"/>
</dbReference>
<dbReference type="InterPro" id="IPR027434">
    <property type="entry name" value="Homing_endonucl"/>
</dbReference>
<dbReference type="InterPro" id="IPR004860">
    <property type="entry name" value="LAGLIDADG_dom"/>
</dbReference>
<dbReference type="Pfam" id="PF03161">
    <property type="entry name" value="LAGLIDADG_2"/>
    <property type="match status" value="1"/>
</dbReference>
<dbReference type="SUPFAM" id="SSF55608">
    <property type="entry name" value="Homing endonucleases"/>
    <property type="match status" value="1"/>
</dbReference>
<keyword id="KW-0255">Endonuclease</keyword>
<keyword id="KW-0378">Hydrolase</keyword>
<keyword id="KW-0404">Intron homing</keyword>
<keyword id="KW-0496">Mitochondrion</keyword>
<keyword id="KW-0540">Nuclease</keyword>
<keyword id="KW-1185">Reference proteome</keyword>
<reference key="1">
    <citation type="submission" date="2005-08" db="EMBL/GenBank/DDBJ databases">
        <title>Annotation of mitochondrial genome of Ustilago maydis and comparative analysis of basidiomycete mtDNAs.</title>
        <authorList>
            <person name="Kennell J.C."/>
            <person name="Boehmer C."/>
        </authorList>
    </citation>
    <scope>NUCLEOTIDE SEQUENCE [LARGE SCALE GENOMIC DNA]</scope>
    <source>
        <strain>DSM 14603 / FGSC 9021 / UM521</strain>
    </source>
</reference>
<reference key="2">
    <citation type="journal article" date="2006" name="Nature">
        <title>Insights from the genome of the biotrophic fungal plant pathogen Ustilago maydis.</title>
        <authorList>
            <person name="Kaemper J."/>
            <person name="Kahmann R."/>
            <person name="Boelker M."/>
            <person name="Ma L.-J."/>
            <person name="Brefort T."/>
            <person name="Saville B.J."/>
            <person name="Banuett F."/>
            <person name="Kronstad J.W."/>
            <person name="Gold S.E."/>
            <person name="Mueller O."/>
            <person name="Perlin M.H."/>
            <person name="Woesten H.A.B."/>
            <person name="de Vries R."/>
            <person name="Ruiz-Herrera J."/>
            <person name="Reynaga-Pena C.G."/>
            <person name="Snetselaar K."/>
            <person name="McCann M."/>
            <person name="Perez-Martin J."/>
            <person name="Feldbruegge M."/>
            <person name="Basse C.W."/>
            <person name="Steinberg G."/>
            <person name="Ibeas J.I."/>
            <person name="Holloman W."/>
            <person name="Guzman P."/>
            <person name="Farman M.L."/>
            <person name="Stajich J.E."/>
            <person name="Sentandreu R."/>
            <person name="Gonzalez-Prieto J.M."/>
            <person name="Kennell J.C."/>
            <person name="Molina L."/>
            <person name="Schirawski J."/>
            <person name="Mendoza-Mendoza A."/>
            <person name="Greilinger D."/>
            <person name="Muench K."/>
            <person name="Roessel N."/>
            <person name="Scherer M."/>
            <person name="Vranes M."/>
            <person name="Ladendorf O."/>
            <person name="Vincon V."/>
            <person name="Fuchs U."/>
            <person name="Sandrock B."/>
            <person name="Meng S."/>
            <person name="Ho E.C.H."/>
            <person name="Cahill M.J."/>
            <person name="Boyce K.J."/>
            <person name="Klose J."/>
            <person name="Klosterman S.J."/>
            <person name="Deelstra H.J."/>
            <person name="Ortiz-Castellanos L."/>
            <person name="Li W."/>
            <person name="Sanchez-Alonso P."/>
            <person name="Schreier P.H."/>
            <person name="Haeuser-Hahn I."/>
            <person name="Vaupel M."/>
            <person name="Koopmann E."/>
            <person name="Friedrich G."/>
            <person name="Voss H."/>
            <person name="Schlueter T."/>
            <person name="Margolis J."/>
            <person name="Platt D."/>
            <person name="Swimmer C."/>
            <person name="Gnirke A."/>
            <person name="Chen F."/>
            <person name="Vysotskaia V."/>
            <person name="Mannhaupt G."/>
            <person name="Gueldener U."/>
            <person name="Muensterkoetter M."/>
            <person name="Haase D."/>
            <person name="Oesterheld M."/>
            <person name="Mewes H.-W."/>
            <person name="Mauceli E.W."/>
            <person name="DeCaprio D."/>
            <person name="Wade C.M."/>
            <person name="Butler J."/>
            <person name="Young S.K."/>
            <person name="Jaffe D.B."/>
            <person name="Calvo S.E."/>
            <person name="Nusbaum C."/>
            <person name="Galagan J.E."/>
            <person name="Birren B.W."/>
        </authorList>
    </citation>
    <scope>NUCLEOTIDE SEQUENCE [LARGE SCALE GENOMIC DNA]</scope>
    <source>
        <strain>DSM 14603 / FGSC 9021 / UM521</strain>
    </source>
</reference>
<sequence>MDGEVKSYWFKTFSHKSFSVIWDLFYNTSNGVTKKTINSGTILNHLNEVGLAYWVMGDGSLHREGRVLTLHTQGFSHDENKMMSEELNLKFGFKSKVVKHKNKFVVQFTTSDANKLHDLIKPYLIPTMQYKLPRKL</sequence>
<geneLocation type="mitochondrion"/>
<feature type="chain" id="PRO_0000271167" description="Probable intron-encoded DNA endonuclease 3">
    <location>
        <begin position="1"/>
        <end position="136"/>
    </location>
</feature>